<dbReference type="EC" id="6.1.1.9" evidence="1"/>
<dbReference type="EMBL" id="CP000020">
    <property type="protein sequence ID" value="AAW84906.1"/>
    <property type="molecule type" value="Genomic_DNA"/>
</dbReference>
<dbReference type="RefSeq" id="WP_011261201.1">
    <property type="nucleotide sequence ID" value="NC_006840.2"/>
</dbReference>
<dbReference type="RefSeq" id="YP_203794.1">
    <property type="nucleotide sequence ID" value="NC_006840.2"/>
</dbReference>
<dbReference type="SMR" id="Q5E7U0"/>
<dbReference type="STRING" id="312309.VF_0411"/>
<dbReference type="EnsemblBacteria" id="AAW84906">
    <property type="protein sequence ID" value="AAW84906"/>
    <property type="gene ID" value="VF_0411"/>
</dbReference>
<dbReference type="GeneID" id="54163038"/>
<dbReference type="KEGG" id="vfi:VF_0411"/>
<dbReference type="PATRIC" id="fig|312309.11.peg.401"/>
<dbReference type="eggNOG" id="COG0525">
    <property type="taxonomic scope" value="Bacteria"/>
</dbReference>
<dbReference type="HOGENOM" id="CLU_001493_0_2_6"/>
<dbReference type="OrthoDB" id="9810365at2"/>
<dbReference type="Proteomes" id="UP000000537">
    <property type="component" value="Chromosome I"/>
</dbReference>
<dbReference type="GO" id="GO:0005829">
    <property type="term" value="C:cytosol"/>
    <property type="evidence" value="ECO:0007669"/>
    <property type="project" value="TreeGrafter"/>
</dbReference>
<dbReference type="GO" id="GO:0002161">
    <property type="term" value="F:aminoacyl-tRNA deacylase activity"/>
    <property type="evidence" value="ECO:0007669"/>
    <property type="project" value="InterPro"/>
</dbReference>
<dbReference type="GO" id="GO:0005524">
    <property type="term" value="F:ATP binding"/>
    <property type="evidence" value="ECO:0007669"/>
    <property type="project" value="UniProtKB-UniRule"/>
</dbReference>
<dbReference type="GO" id="GO:0004832">
    <property type="term" value="F:valine-tRNA ligase activity"/>
    <property type="evidence" value="ECO:0007669"/>
    <property type="project" value="UniProtKB-UniRule"/>
</dbReference>
<dbReference type="GO" id="GO:0006438">
    <property type="term" value="P:valyl-tRNA aminoacylation"/>
    <property type="evidence" value="ECO:0007669"/>
    <property type="project" value="UniProtKB-UniRule"/>
</dbReference>
<dbReference type="CDD" id="cd07962">
    <property type="entry name" value="Anticodon_Ia_Val"/>
    <property type="match status" value="1"/>
</dbReference>
<dbReference type="CDD" id="cd00817">
    <property type="entry name" value="ValRS_core"/>
    <property type="match status" value="1"/>
</dbReference>
<dbReference type="FunFam" id="1.10.287.380:FF:000001">
    <property type="entry name" value="Valine--tRNA ligase"/>
    <property type="match status" value="1"/>
</dbReference>
<dbReference type="FunFam" id="1.10.730.10:FF:000007">
    <property type="entry name" value="Valine--tRNA ligase"/>
    <property type="match status" value="1"/>
</dbReference>
<dbReference type="FunFam" id="3.40.50.620:FF:000032">
    <property type="entry name" value="Valine--tRNA ligase"/>
    <property type="match status" value="1"/>
</dbReference>
<dbReference type="FunFam" id="3.40.50.620:FF:000146">
    <property type="entry name" value="Valine--tRNA ligase"/>
    <property type="match status" value="1"/>
</dbReference>
<dbReference type="FunFam" id="3.90.740.10:FF:000003">
    <property type="entry name" value="Valine--tRNA ligase"/>
    <property type="match status" value="1"/>
</dbReference>
<dbReference type="FunFam" id="3.90.740.10:FF:000004">
    <property type="entry name" value="Valine--tRNA ligase"/>
    <property type="match status" value="1"/>
</dbReference>
<dbReference type="Gene3D" id="3.40.50.620">
    <property type="entry name" value="HUPs"/>
    <property type="match status" value="2"/>
</dbReference>
<dbReference type="Gene3D" id="1.10.730.10">
    <property type="entry name" value="Isoleucyl-tRNA Synthetase, Domain 1"/>
    <property type="match status" value="1"/>
</dbReference>
<dbReference type="Gene3D" id="1.10.287.380">
    <property type="entry name" value="Valyl-tRNA synthetase, C-terminal domain"/>
    <property type="match status" value="1"/>
</dbReference>
<dbReference type="Gene3D" id="3.90.740.10">
    <property type="entry name" value="Valyl/Leucyl/Isoleucyl-tRNA synthetase, editing domain"/>
    <property type="match status" value="1"/>
</dbReference>
<dbReference type="HAMAP" id="MF_02004">
    <property type="entry name" value="Val_tRNA_synth_type1"/>
    <property type="match status" value="1"/>
</dbReference>
<dbReference type="InterPro" id="IPR001412">
    <property type="entry name" value="aa-tRNA-synth_I_CS"/>
</dbReference>
<dbReference type="InterPro" id="IPR002300">
    <property type="entry name" value="aa-tRNA-synth_Ia"/>
</dbReference>
<dbReference type="InterPro" id="IPR033705">
    <property type="entry name" value="Anticodon_Ia_Val"/>
</dbReference>
<dbReference type="InterPro" id="IPR013155">
    <property type="entry name" value="M/V/L/I-tRNA-synth_anticd-bd"/>
</dbReference>
<dbReference type="InterPro" id="IPR014729">
    <property type="entry name" value="Rossmann-like_a/b/a_fold"/>
</dbReference>
<dbReference type="InterPro" id="IPR010978">
    <property type="entry name" value="tRNA-bd_arm"/>
</dbReference>
<dbReference type="InterPro" id="IPR009080">
    <property type="entry name" value="tRNAsynth_Ia_anticodon-bd"/>
</dbReference>
<dbReference type="InterPro" id="IPR037118">
    <property type="entry name" value="Val-tRNA_synth_C_sf"/>
</dbReference>
<dbReference type="InterPro" id="IPR019499">
    <property type="entry name" value="Val-tRNA_synth_tRNA-bd"/>
</dbReference>
<dbReference type="InterPro" id="IPR009008">
    <property type="entry name" value="Val/Leu/Ile-tRNA-synth_edit"/>
</dbReference>
<dbReference type="InterPro" id="IPR002303">
    <property type="entry name" value="Valyl-tRNA_ligase"/>
</dbReference>
<dbReference type="NCBIfam" id="NF004349">
    <property type="entry name" value="PRK05729.1"/>
    <property type="match status" value="1"/>
</dbReference>
<dbReference type="NCBIfam" id="TIGR00422">
    <property type="entry name" value="valS"/>
    <property type="match status" value="1"/>
</dbReference>
<dbReference type="PANTHER" id="PTHR11946:SF93">
    <property type="entry name" value="VALINE--TRNA LIGASE, CHLOROPLASTIC_MITOCHONDRIAL 2"/>
    <property type="match status" value="1"/>
</dbReference>
<dbReference type="PANTHER" id="PTHR11946">
    <property type="entry name" value="VALYL-TRNA SYNTHETASES"/>
    <property type="match status" value="1"/>
</dbReference>
<dbReference type="Pfam" id="PF08264">
    <property type="entry name" value="Anticodon_1"/>
    <property type="match status" value="1"/>
</dbReference>
<dbReference type="Pfam" id="PF00133">
    <property type="entry name" value="tRNA-synt_1"/>
    <property type="match status" value="1"/>
</dbReference>
<dbReference type="Pfam" id="PF10458">
    <property type="entry name" value="Val_tRNA-synt_C"/>
    <property type="match status" value="1"/>
</dbReference>
<dbReference type="PRINTS" id="PR00986">
    <property type="entry name" value="TRNASYNTHVAL"/>
</dbReference>
<dbReference type="SUPFAM" id="SSF47323">
    <property type="entry name" value="Anticodon-binding domain of a subclass of class I aminoacyl-tRNA synthetases"/>
    <property type="match status" value="1"/>
</dbReference>
<dbReference type="SUPFAM" id="SSF52374">
    <property type="entry name" value="Nucleotidylyl transferase"/>
    <property type="match status" value="1"/>
</dbReference>
<dbReference type="SUPFAM" id="SSF46589">
    <property type="entry name" value="tRNA-binding arm"/>
    <property type="match status" value="1"/>
</dbReference>
<dbReference type="SUPFAM" id="SSF50677">
    <property type="entry name" value="ValRS/IleRS/LeuRS editing domain"/>
    <property type="match status" value="1"/>
</dbReference>
<dbReference type="PROSITE" id="PS00178">
    <property type="entry name" value="AA_TRNA_LIGASE_I"/>
    <property type="match status" value="1"/>
</dbReference>
<reference key="1">
    <citation type="journal article" date="2005" name="Proc. Natl. Acad. Sci. U.S.A.">
        <title>Complete genome sequence of Vibrio fischeri: a symbiotic bacterium with pathogenic congeners.</title>
        <authorList>
            <person name="Ruby E.G."/>
            <person name="Urbanowski M."/>
            <person name="Campbell J."/>
            <person name="Dunn A."/>
            <person name="Faini M."/>
            <person name="Gunsalus R."/>
            <person name="Lostroh P."/>
            <person name="Lupp C."/>
            <person name="McCann J."/>
            <person name="Millikan D."/>
            <person name="Schaefer A."/>
            <person name="Stabb E."/>
            <person name="Stevens A."/>
            <person name="Visick K."/>
            <person name="Whistler C."/>
            <person name="Greenberg E.P."/>
        </authorList>
    </citation>
    <scope>NUCLEOTIDE SEQUENCE [LARGE SCALE GENOMIC DNA]</scope>
    <source>
        <strain>ATCC 700601 / ES114</strain>
    </source>
</reference>
<organism>
    <name type="scientific">Aliivibrio fischeri (strain ATCC 700601 / ES114)</name>
    <name type="common">Vibrio fischeri</name>
    <dbReference type="NCBI Taxonomy" id="312309"/>
    <lineage>
        <taxon>Bacteria</taxon>
        <taxon>Pseudomonadati</taxon>
        <taxon>Pseudomonadota</taxon>
        <taxon>Gammaproteobacteria</taxon>
        <taxon>Vibrionales</taxon>
        <taxon>Vibrionaceae</taxon>
        <taxon>Aliivibrio</taxon>
    </lineage>
</organism>
<feature type="chain" id="PRO_0000224592" description="Valine--tRNA ligase">
    <location>
        <begin position="1"/>
        <end position="957"/>
    </location>
</feature>
<feature type="coiled-coil region" evidence="1">
    <location>
        <begin position="890"/>
        <end position="956"/>
    </location>
</feature>
<feature type="short sequence motif" description="'HIGH' region">
    <location>
        <begin position="42"/>
        <end position="52"/>
    </location>
</feature>
<feature type="short sequence motif" description="'KMSKS' region">
    <location>
        <begin position="554"/>
        <end position="558"/>
    </location>
</feature>
<feature type="binding site" evidence="1">
    <location>
        <position position="557"/>
    </location>
    <ligand>
        <name>ATP</name>
        <dbReference type="ChEBI" id="CHEBI:30616"/>
    </ligand>
</feature>
<evidence type="ECO:0000255" key="1">
    <source>
        <dbReference type="HAMAP-Rule" id="MF_02004"/>
    </source>
</evidence>
<keyword id="KW-0030">Aminoacyl-tRNA synthetase</keyword>
<keyword id="KW-0067">ATP-binding</keyword>
<keyword id="KW-0175">Coiled coil</keyword>
<keyword id="KW-0963">Cytoplasm</keyword>
<keyword id="KW-0436">Ligase</keyword>
<keyword id="KW-0547">Nucleotide-binding</keyword>
<keyword id="KW-0648">Protein biosynthesis</keyword>
<keyword id="KW-1185">Reference proteome</keyword>
<protein>
    <recommendedName>
        <fullName evidence="1">Valine--tRNA ligase</fullName>
        <ecNumber evidence="1">6.1.1.9</ecNumber>
    </recommendedName>
    <alternativeName>
        <fullName evidence="1">Valyl-tRNA synthetase</fullName>
        <shortName evidence="1">ValRS</shortName>
    </alternativeName>
</protein>
<name>SYV_ALIF1</name>
<proteinExistence type="inferred from homology"/>
<sequence>MEKTYNPQSIEQTLYQTWEEKGYFKPHGDTSKEAYSIMIPPPNVTGSLHMGHAFQDTIMDTLIRAERMKGKNTLWQVGTDHAGIATQMVVERKIAAEEGKTKHDYGRDAFIDKIWEWKNESGGTITKQLRRLGASVDWDRERFTMDDGLSAATQEVFVRLYEEDLIYRGKRLVNWDPKLHTAISDLEVENKDKKGFMWHFRYPLANGVKTADGKDYIVVATTRPETMLGDTGVAVNPEDPRYKDLIGKEILLPIVNRLIPIVGDEHADMEKGTGCVKITPAHDFNDYEVGKRNQLPMINILTFNADIRESAEVFTTNGEVSDVYSTEIPAKYQGMERFEARKTIVAEFEELGLLEEIKDHDLTVPYGDRGGVVIEPMLTDQWYVRTAPLAEPAVKAVEDGQIQFVPKQYENMYFAWMRDVQDWCISRQLWWGHRIPAWYDNDGKVYVGRTEEEVREKNNLAPVVVLRQDDDVLDTWFSSALWTFGTQGWPENTDALKTFHPSEVLVSGFDIIFFWVARMIMMTMHFVKDEEGNAQVPFKTVYMTGLIRDENGDKMSKSKGNVLDPIDMIDGIDLESLVEKRCGNMMQPQLAKKIEKNTRKTFENGIEPYGTDALRFTLAAMASTGRDINWDMKRLEGYRNFCNKLWNASRYVLMNTEEHDCGMSLSAEERANMEFSLADKWIESQFELAAKEFNAHLDNYRLDMAANTLYEFIWNQFCDWYLELTKPVLWKGTEAQQQATRYMLITVLEKTLRLAHPVLPYITESIWQSVKPLVDGVEGDTIMTQALPQFNEENFNADVVADLEWVKAFITSIRNLRAEYDIAPSKGLEVMIKVADEKDAARIEANKVVLSSLAKLDEIKVLANGEETPACATSLVGKSELMIPMAGLIDKDAELARLAGEVKKTQGEIKRIEGKLGNEGFVAKAPEAVIAKEREKLEGYQETLVKLEAQQETIAAL</sequence>
<accession>Q5E7U0</accession>
<comment type="function">
    <text evidence="1">Catalyzes the attachment of valine to tRNA(Val). As ValRS can inadvertently accommodate and process structurally similar amino acids such as threonine, to avoid such errors, it has a 'posttransfer' editing activity that hydrolyzes mischarged Thr-tRNA(Val) in a tRNA-dependent manner.</text>
</comment>
<comment type="catalytic activity">
    <reaction evidence="1">
        <text>tRNA(Val) + L-valine + ATP = L-valyl-tRNA(Val) + AMP + diphosphate</text>
        <dbReference type="Rhea" id="RHEA:10704"/>
        <dbReference type="Rhea" id="RHEA-COMP:9672"/>
        <dbReference type="Rhea" id="RHEA-COMP:9708"/>
        <dbReference type="ChEBI" id="CHEBI:30616"/>
        <dbReference type="ChEBI" id="CHEBI:33019"/>
        <dbReference type="ChEBI" id="CHEBI:57762"/>
        <dbReference type="ChEBI" id="CHEBI:78442"/>
        <dbReference type="ChEBI" id="CHEBI:78537"/>
        <dbReference type="ChEBI" id="CHEBI:456215"/>
        <dbReference type="EC" id="6.1.1.9"/>
    </reaction>
</comment>
<comment type="subunit">
    <text evidence="1">Monomer.</text>
</comment>
<comment type="subcellular location">
    <subcellularLocation>
        <location evidence="1">Cytoplasm</location>
    </subcellularLocation>
</comment>
<comment type="domain">
    <text evidence="1">ValRS has two distinct active sites: one for aminoacylation and one for editing. The misactivated threonine is translocated from the active site to the editing site.</text>
</comment>
<comment type="domain">
    <text evidence="1">The C-terminal coiled-coil domain is crucial for aminoacylation activity.</text>
</comment>
<comment type="similarity">
    <text evidence="1">Belongs to the class-I aminoacyl-tRNA synthetase family. ValS type 1 subfamily.</text>
</comment>
<gene>
    <name evidence="1" type="primary">valS</name>
    <name type="ordered locus">VF_0411</name>
</gene>